<evidence type="ECO:0000250" key="1"/>
<evidence type="ECO:0000250" key="2">
    <source>
        <dbReference type="UniProtKB" id="P62979"/>
    </source>
</evidence>
<evidence type="ECO:0000250" key="3">
    <source>
        <dbReference type="UniProtKB" id="P62983"/>
    </source>
</evidence>
<evidence type="ECO:0000255" key="4">
    <source>
        <dbReference type="PROSITE-ProRule" id="PRU00214"/>
    </source>
</evidence>
<evidence type="ECO:0000256" key="5">
    <source>
        <dbReference type="SAM" id="MobiDB-lite"/>
    </source>
</evidence>
<evidence type="ECO:0000305" key="6"/>
<sequence length="156" mass="17965">MQIFVKTLTGKTITLEVEPSDTIENVKAKIQDKEGIPPDQQRLIFAGKQLEDGRTLSDYNIQKESTLHLVLRLRGGAKKRKKKSYTTPKKNKHKRKKVKLAVLKYYKVDENGKISRLRRECPSDECGAGVFMASHFDRHYCGKCCLTYCFNKPEDK</sequence>
<organism>
    <name type="scientific">Cavia porcellus</name>
    <name type="common">Guinea pig</name>
    <dbReference type="NCBI Taxonomy" id="10141"/>
    <lineage>
        <taxon>Eukaryota</taxon>
        <taxon>Metazoa</taxon>
        <taxon>Chordata</taxon>
        <taxon>Craniata</taxon>
        <taxon>Vertebrata</taxon>
        <taxon>Euteleostomi</taxon>
        <taxon>Mammalia</taxon>
        <taxon>Eutheria</taxon>
        <taxon>Euarchontoglires</taxon>
        <taxon>Glires</taxon>
        <taxon>Rodentia</taxon>
        <taxon>Hystricomorpha</taxon>
        <taxon>Caviidae</taxon>
        <taxon>Cavia</taxon>
    </lineage>
</organism>
<proteinExistence type="evidence at protein level"/>
<dbReference type="EMBL" id="D83209">
    <property type="protein sequence ID" value="BAA11843.1"/>
    <property type="molecule type" value="mRNA"/>
</dbReference>
<dbReference type="RefSeq" id="NP_001166537.1">
    <property type="nucleotide sequence ID" value="NM_001173066.1"/>
</dbReference>
<dbReference type="RefSeq" id="XP_005002694.1">
    <property type="nucleotide sequence ID" value="XM_005002637.2"/>
</dbReference>
<dbReference type="BMRB" id="P62978"/>
<dbReference type="SMR" id="P62978"/>
<dbReference type="FunCoup" id="P62978">
    <property type="interactions" value="2160"/>
</dbReference>
<dbReference type="STRING" id="10141.ENSCPOP00000005248"/>
<dbReference type="Ensembl" id="ENSCPOT00000005882.3">
    <property type="protein sequence ID" value="ENSCPOP00000005248.2"/>
    <property type="gene ID" value="ENSCPOG00000005819.4"/>
</dbReference>
<dbReference type="GeneID" id="100286787"/>
<dbReference type="KEGG" id="cpoc:100286787"/>
<dbReference type="CTD" id="6233"/>
<dbReference type="VEuPathDB" id="HostDB:ENSCPOG00000005819"/>
<dbReference type="eggNOG" id="KOG0004">
    <property type="taxonomic scope" value="Eukaryota"/>
</dbReference>
<dbReference type="GeneTree" id="ENSGT00910000144152"/>
<dbReference type="HOGENOM" id="CLU_010412_2_0_1"/>
<dbReference type="InParanoid" id="P62978"/>
<dbReference type="OMA" id="GVFMAFH"/>
<dbReference type="OrthoDB" id="428577at2759"/>
<dbReference type="Proteomes" id="UP000005447">
    <property type="component" value="Unassembled WGS sequence"/>
</dbReference>
<dbReference type="Bgee" id="ENSCPOG00000005819">
    <property type="expression patterns" value="Expressed in zone of skin and 13 other cell types or tissues"/>
</dbReference>
<dbReference type="GO" id="GO:0022626">
    <property type="term" value="C:cytosolic ribosome"/>
    <property type="evidence" value="ECO:0007669"/>
    <property type="project" value="Ensembl"/>
</dbReference>
<dbReference type="GO" id="GO:0005783">
    <property type="term" value="C:endoplasmic reticulum"/>
    <property type="evidence" value="ECO:0007669"/>
    <property type="project" value="Ensembl"/>
</dbReference>
<dbReference type="GO" id="GO:0005730">
    <property type="term" value="C:nucleolus"/>
    <property type="evidence" value="ECO:0007669"/>
    <property type="project" value="UniProtKB-SubCell"/>
</dbReference>
<dbReference type="GO" id="GO:0032040">
    <property type="term" value="C:small-subunit processome"/>
    <property type="evidence" value="ECO:0000250"/>
    <property type="project" value="UniProtKB"/>
</dbReference>
<dbReference type="GO" id="GO:0045202">
    <property type="term" value="C:synapse"/>
    <property type="evidence" value="ECO:0007669"/>
    <property type="project" value="Ensembl"/>
</dbReference>
<dbReference type="GO" id="GO:0003735">
    <property type="term" value="F:structural constituent of ribosome"/>
    <property type="evidence" value="ECO:0007669"/>
    <property type="project" value="Ensembl"/>
</dbReference>
<dbReference type="GO" id="GO:0008270">
    <property type="term" value="F:zinc ion binding"/>
    <property type="evidence" value="ECO:0007669"/>
    <property type="project" value="UniProtKB-KW"/>
</dbReference>
<dbReference type="GO" id="GO:0042274">
    <property type="term" value="P:ribosomal small subunit biogenesis"/>
    <property type="evidence" value="ECO:0000250"/>
    <property type="project" value="UniProtKB"/>
</dbReference>
<dbReference type="GO" id="GO:0006412">
    <property type="term" value="P:translation"/>
    <property type="evidence" value="ECO:0007669"/>
    <property type="project" value="InterPro"/>
</dbReference>
<dbReference type="CDD" id="cd01803">
    <property type="entry name" value="Ubl_ubiquitin"/>
    <property type="match status" value="1"/>
</dbReference>
<dbReference type="FunFam" id="3.10.20.90:FF:000008">
    <property type="entry name" value="Ubiquitin-40S ribosomal protein S27a"/>
    <property type="match status" value="1"/>
</dbReference>
<dbReference type="Gene3D" id="6.20.50.150">
    <property type="match status" value="1"/>
</dbReference>
<dbReference type="Gene3D" id="3.10.20.90">
    <property type="entry name" value="Phosphatidylinositol 3-kinase Catalytic Subunit, Chain A, domain 1"/>
    <property type="match status" value="1"/>
</dbReference>
<dbReference type="InterPro" id="IPR002906">
    <property type="entry name" value="Ribosomal_eS31"/>
</dbReference>
<dbReference type="InterPro" id="IPR038582">
    <property type="entry name" value="Ribosomal_eS31_euk-type_sf"/>
</dbReference>
<dbReference type="InterPro" id="IPR011332">
    <property type="entry name" value="Ribosomal_zn-bd"/>
</dbReference>
<dbReference type="InterPro" id="IPR000626">
    <property type="entry name" value="Ubiquitin-like_dom"/>
</dbReference>
<dbReference type="InterPro" id="IPR029071">
    <property type="entry name" value="Ubiquitin-like_domsf"/>
</dbReference>
<dbReference type="InterPro" id="IPR019954">
    <property type="entry name" value="Ubiquitin_CS"/>
</dbReference>
<dbReference type="InterPro" id="IPR019956">
    <property type="entry name" value="Ubiquitin_dom"/>
</dbReference>
<dbReference type="InterPro" id="IPR050158">
    <property type="entry name" value="Ubiquitin_ubiquitin-like"/>
</dbReference>
<dbReference type="PANTHER" id="PTHR10666">
    <property type="entry name" value="UBIQUITIN"/>
    <property type="match status" value="1"/>
</dbReference>
<dbReference type="Pfam" id="PF01599">
    <property type="entry name" value="Ribosomal_S27"/>
    <property type="match status" value="1"/>
</dbReference>
<dbReference type="Pfam" id="PF00240">
    <property type="entry name" value="ubiquitin"/>
    <property type="match status" value="1"/>
</dbReference>
<dbReference type="PRINTS" id="PR00348">
    <property type="entry name" value="UBIQUITIN"/>
</dbReference>
<dbReference type="SMART" id="SM01402">
    <property type="entry name" value="Ribosomal_S27"/>
    <property type="match status" value="1"/>
</dbReference>
<dbReference type="SMART" id="SM00213">
    <property type="entry name" value="UBQ"/>
    <property type="match status" value="1"/>
</dbReference>
<dbReference type="SUPFAM" id="SSF54236">
    <property type="entry name" value="Ubiquitin-like"/>
    <property type="match status" value="1"/>
</dbReference>
<dbReference type="SUPFAM" id="SSF57829">
    <property type="entry name" value="Zn-binding ribosomal proteins"/>
    <property type="match status" value="1"/>
</dbReference>
<dbReference type="PROSITE" id="PS00299">
    <property type="entry name" value="UBIQUITIN_1"/>
    <property type="match status" value="1"/>
</dbReference>
<dbReference type="PROSITE" id="PS50053">
    <property type="entry name" value="UBIQUITIN_2"/>
    <property type="match status" value="1"/>
</dbReference>
<feature type="chain" id="PRO_0000396475" description="Ubiquitin">
    <location>
        <begin position="1"/>
        <end position="76"/>
    </location>
</feature>
<feature type="chain" id="PRO_0000396476" description="Small ribosomal subunit protein eS31">
    <location>
        <begin position="77"/>
        <end position="156"/>
    </location>
</feature>
<feature type="domain" description="Ubiquitin-like" evidence="4">
    <location>
        <begin position="1"/>
        <end position="76"/>
    </location>
</feature>
<feature type="zinc finger region" description="C4-type">
    <location>
        <begin position="45"/>
        <end position="68"/>
    </location>
</feature>
<feature type="region of interest" description="Disordered" evidence="5">
    <location>
        <begin position="76"/>
        <end position="95"/>
    </location>
</feature>
<feature type="site" description="Interacts with activating enzyme" evidence="1">
    <location>
        <position position="54"/>
    </location>
</feature>
<feature type="site" description="Essential for function" evidence="1">
    <location>
        <position position="68"/>
    </location>
</feature>
<feature type="site" description="Interacts with activating enzyme" evidence="1">
    <location>
        <position position="72"/>
    </location>
</feature>
<feature type="modified residue" description="Phosphoserine; by PINK1" evidence="2">
    <location>
        <position position="65"/>
    </location>
</feature>
<feature type="modified residue" description="ADP-ribosylglycine" evidence="2">
    <location>
        <position position="76"/>
    </location>
</feature>
<feature type="modified residue" description="N6-acetyllysine" evidence="2">
    <location>
        <position position="104"/>
    </location>
</feature>
<feature type="modified residue" description="N6-acetyllysine" evidence="2">
    <location>
        <position position="113"/>
    </location>
</feature>
<feature type="modified residue" description="N6-acetyllysine" evidence="3">
    <location>
        <position position="152"/>
    </location>
</feature>
<feature type="cross-link" description="Glycyl lysine isopeptide (Lys-Gly) (interchain with G-Cter in ubiquitin)" evidence="2">
    <location>
        <position position="6"/>
    </location>
</feature>
<feature type="cross-link" description="Glycyl lysine isopeptide (Lys-Gly) (interchain with G-Cter in ubiquitin)" evidence="2">
    <location>
        <position position="11"/>
    </location>
</feature>
<feature type="cross-link" description="Glycyl lysine isopeptide (Lys-Gly) (interchain with G-Cter in ubiquitin)" evidence="2">
    <location>
        <position position="27"/>
    </location>
</feature>
<feature type="cross-link" description="Glycyl lysine isopeptide (Lys-Gly) (interchain with G-Cter in ubiquitin)" evidence="2">
    <location>
        <position position="29"/>
    </location>
</feature>
<feature type="cross-link" description="Glycyl lysine isopeptide (Lys-Gly) (interchain with G-Cter in ubiquitin)" evidence="2">
    <location>
        <position position="33"/>
    </location>
</feature>
<feature type="cross-link" description="Glycyl lysine isopeptide (Lys-Gly) (interchain with G-Cter in ubiquitin)" evidence="2">
    <location>
        <position position="48"/>
    </location>
</feature>
<feature type="cross-link" description="Glycyl lysine isopeptide (Lys-Gly) (interchain with G-Cter in ubiquitin)" evidence="2">
    <location>
        <position position="63"/>
    </location>
</feature>
<feature type="cross-link" description="Glycyl lysine isopeptide (Gly-Lys) (interchain with K-? in acceptor proteins)">
    <location>
        <position position="76"/>
    </location>
</feature>
<feature type="cross-link" description="Glycyl lysine isopeptide (Lys-Gly) (interchain with G-Cter in ubiquitin)" evidence="2">
    <location>
        <position position="107"/>
    </location>
</feature>
<feature type="cross-link" description="Glycyl lysine isopeptide (Lys-Gly) (interchain with G-Cter in ubiquitin)" evidence="2">
    <location>
        <position position="113"/>
    </location>
</feature>
<gene>
    <name type="primary">RPS27A</name>
    <name type="synonym">UBA80</name>
    <name type="synonym">UBCEP1</name>
    <name type="synonym">UBIZ</name>
</gene>
<accession>P62978</accession>
<accession>P02248</accession>
<accession>P02249</accession>
<accession>P02250</accession>
<accession>P14798</accession>
<accession>P62977</accession>
<accession>Q29120</accession>
<accession>Q91887</accession>
<accession>Q91888</accession>
<accession>Q9BQ77</accession>
<reference key="1">
    <citation type="submission" date="1996-02" db="EMBL/GenBank/DDBJ databases">
        <title>Ascorbate-dependent expression of ubiquitin genes in guinea pig.</title>
        <authorList>
            <person name="Tsukagoshi N."/>
        </authorList>
    </citation>
    <scope>NUCLEOTIDE SEQUENCE [MRNA]</scope>
    <source>
        <tissue>Spleen</tissue>
    </source>
</reference>
<comment type="function">
    <molecule>Ubiquitin</molecule>
    <text evidence="2">Exists either covalently attached to another protein, or free (unanchored). When covalently bound, it is conjugated to target proteins via an isopeptide bond either as a monomer (monoubiquitin), a polymer linked via different Lys residues of the ubiquitin (polyubiquitin chains) or a linear polymer linked via the initiator Met of the ubiquitin (linear polyubiquitin chains). Polyubiquitin chains, when attached to a target protein, have different functions depending on the Lys residue of the ubiquitin that is linked: Lys-6-linked may be involved in DNA repair; Lys-11-linked is involved in ERAD (endoplasmic reticulum-associated degradation) and in cell-cycle regulation; Lys-29-linked is involved in proteotoxic stress response and cell cycle; Lys-33-linked is involved in kinase modification; Lys-48-linked is involved in protein degradation via the proteasome; Lys-63-linked is involved in endocytosis, DNA-damage responses as well as in signaling processes leading to activation of the transcription factor NF-kappa-B. Linear polymer chains formed via attachment by the initiator Met lead to cell signaling. Ubiquitin is usually conjugated to Lys residues of target proteins, however, in rare cases, conjugation to Cys or Ser residues has been observed. When polyubiquitin is free (unanchored-polyubiquitin), it also has distinct roles, such as in activation of protein kinases, and in signaling.</text>
</comment>
<comment type="function">
    <molecule>Small ribosomal subunit protein eS31</molecule>
    <text evidence="2">Component of the 40S subunit of the ribosome. Part of the small subunit (SSU) processome, first precursor of the small eukaryotic ribosomal subunit. During the assembly of the SSU processome in the nucleolus, many ribosome biogenesis factors, an RNA chaperone and ribosomal proteins associate with the nascent pre-rRNA and work in concert to generate RNA folding, modifications, rearrangements and cleavage as well as targeted degradation of pre-ribosomal RNA by the RNA exosome.</text>
</comment>
<comment type="subunit">
    <molecule>Small ribosomal subunit protein eS31</molecule>
    <text evidence="2">Part of the 40S ribosomal subunit. Part of the small subunit (SSU) processome, composed of more than 70 proteins and the RNA chaperone small nucleolar RNA (snoRNA) U3.</text>
</comment>
<comment type="subcellular location">
    <molecule>Ubiquitin</molecule>
    <subcellularLocation>
        <location evidence="1">Cytoplasm</location>
    </subcellularLocation>
    <subcellularLocation>
        <location evidence="1">Nucleus</location>
    </subcellularLocation>
</comment>
<comment type="subcellular location">
    <molecule>Small ribosomal subunit protein eS31</molecule>
    <subcellularLocation>
        <location evidence="2">Nucleus</location>
        <location evidence="2">Nucleolus</location>
    </subcellularLocation>
</comment>
<comment type="PTM">
    <molecule>Ubiquitin</molecule>
    <text evidence="2">Phosphorylated at Ser-65 by PINK1 during mitophagy. Phosphorylated ubiquitin specifically binds and activates parkin (PRKN), triggering mitophagy. Phosphorylation does not affect E1-mediated E2 charging of ubiquitin but affects discharging of E2 enzymes to form polyubiquitin chains. It also affects deubiquitination by deubiquitinase enzymes such as USP30.</text>
</comment>
<comment type="PTM">
    <molecule>Ubiquitin</molecule>
    <text evidence="2">Mono-ADP-ribosylated at the C-terminus by PARP9, a component of the PPAR9-DTX3L complex. ADP-ribosylation requires processing by E1 and E2 enzymes and prevents ubiquitin conjugation to substrates such as histones.</text>
</comment>
<comment type="PTM">
    <molecule>Small ribosomal subunit protein eS31</molecule>
    <text evidence="2">Monoubiquitinated at Lys-107 and Lys-113 by RNF25 in response to ribosome collisions (ribosome stalling): ubiquitination promotes subsequent activation of RNF14, leading to EEF1A1 ubiquitination and degradation and rescue of stalled ribosomes. Deubiquitination at Lys-113 by USP16 is required for maturation of the 40S ribosomal complex.</text>
</comment>
<comment type="miscellaneous">
    <text>Ubiquitin is encoded by 4 different genes. UBA52 and RPS27A genes code for a single copy of ubiquitin fused to the ribosomal proteins eL40 and eS31, respectively. UBB and UBC genes code for a polyubiquitin precursor with exact head to tail repeats, the number of repeats differ between species and strains.</text>
</comment>
<comment type="miscellaneous">
    <text>For a better understanding, features related to ubiquitin are only indicated for the first chain.</text>
</comment>
<comment type="similarity">
    <text evidence="6">In the N-terminal section; belongs to the ubiquitin family.</text>
</comment>
<comment type="similarity">
    <text evidence="6">In the C-terminal section; belongs to the eukaryotic ribosomal protein eS31 family.</text>
</comment>
<protein>
    <recommendedName>
        <fullName evidence="6">Ubiquitin-ribosomal protein eS31 fusion protein</fullName>
    </recommendedName>
    <alternativeName>
        <fullName>Ubiquitin carboxyl extension protein 80</fullName>
    </alternativeName>
    <component>
        <recommendedName>
            <fullName>Ubiquitin</fullName>
        </recommendedName>
    </component>
    <component>
        <recommendedName>
            <fullName evidence="6">Small ribosomal subunit protein eS31</fullName>
        </recommendedName>
        <alternativeName>
            <fullName>40S ribosomal protein S27a</fullName>
        </alternativeName>
    </component>
</protein>
<keyword id="KW-0007">Acetylation</keyword>
<keyword id="KW-0013">ADP-ribosylation</keyword>
<keyword id="KW-0963">Cytoplasm</keyword>
<keyword id="KW-1017">Isopeptide bond</keyword>
<keyword id="KW-0479">Metal-binding</keyword>
<keyword id="KW-0539">Nucleus</keyword>
<keyword id="KW-0597">Phosphoprotein</keyword>
<keyword id="KW-1185">Reference proteome</keyword>
<keyword id="KW-0677">Repeat</keyword>
<keyword id="KW-0687">Ribonucleoprotein</keyword>
<keyword id="KW-0689">Ribosomal protein</keyword>
<keyword id="KW-0832">Ubl conjugation</keyword>
<keyword id="KW-0862">Zinc</keyword>
<keyword id="KW-0863">Zinc-finger</keyword>
<name>RS27A_CAVPO</name>